<gene>
    <name evidence="1" type="primary">proS</name>
    <name type="ordered locus">Athe_0572</name>
</gene>
<feature type="chain" id="PRO_1000185483" description="Proline--tRNA ligase">
    <location>
        <begin position="1"/>
        <end position="572"/>
    </location>
</feature>
<sequence>MKVSELFMPTLKETPSDAEIESHKLMLRSGFMRQLSSGIYVYLPLGYRVLRKIENIVREEMDRSGAQEVHMSALMPKELWEESGRWAVFGPEMFRIKDRNEREYCLGPTHEEAFTYIVRNEISSYRDLPKILYQIQTKFRDERRPRFGVMRCREFTMKDAYSFDIDENGLDISYQKMYDAYVRIFKRCGLDVKIVEADTGAMGGASSHEFMVPSSVGEAEIAYCKACGYAANLEKAECLDEPVENKEEPKEKQEVYTPNVRTIEELVSFLGIDSTRFVKTMIYKADDKFVAVLVRGDREVNETKLKNLLKATDLELASAEDVEKITGAKVGFAGPIGLSIDVYADNEVKYLKNFVVGANKTDYHIKNVNLSDFKVTKFTDLRNITQDDLCPKCRSQKVTIERGIEVGHIFKLGTKYTQAFNCVYTDEKGEKKLMIMGCYGIGINRTAAAIIEQMHDEDGIIWPITVAPYEVIIVPVNVKDENQKKIAFEIYENLQRNGVEVLIDDRDERAGVKFKDADLIGIPFRVTVGKKISEGKLEIRNRRTKESFEVEIEKAIEVVINLIREEKAKYQI</sequence>
<proteinExistence type="inferred from homology"/>
<evidence type="ECO:0000255" key="1">
    <source>
        <dbReference type="HAMAP-Rule" id="MF_01569"/>
    </source>
</evidence>
<dbReference type="EC" id="6.1.1.15" evidence="1"/>
<dbReference type="EMBL" id="CP001393">
    <property type="protein sequence ID" value="ACM59698.1"/>
    <property type="molecule type" value="Genomic_DNA"/>
</dbReference>
<dbReference type="RefSeq" id="WP_015907151.1">
    <property type="nucleotide sequence ID" value="NC_012034.1"/>
</dbReference>
<dbReference type="SMR" id="B9MPD7"/>
<dbReference type="STRING" id="521460.Athe_0572"/>
<dbReference type="GeneID" id="31771927"/>
<dbReference type="KEGG" id="ate:Athe_0572"/>
<dbReference type="eggNOG" id="COG0442">
    <property type="taxonomic scope" value="Bacteria"/>
</dbReference>
<dbReference type="HOGENOM" id="CLU_016739_0_0_9"/>
<dbReference type="Proteomes" id="UP000007723">
    <property type="component" value="Chromosome"/>
</dbReference>
<dbReference type="GO" id="GO:0005829">
    <property type="term" value="C:cytosol"/>
    <property type="evidence" value="ECO:0007669"/>
    <property type="project" value="TreeGrafter"/>
</dbReference>
<dbReference type="GO" id="GO:0002161">
    <property type="term" value="F:aminoacyl-tRNA deacylase activity"/>
    <property type="evidence" value="ECO:0007669"/>
    <property type="project" value="InterPro"/>
</dbReference>
<dbReference type="GO" id="GO:0005524">
    <property type="term" value="F:ATP binding"/>
    <property type="evidence" value="ECO:0007669"/>
    <property type="project" value="UniProtKB-UniRule"/>
</dbReference>
<dbReference type="GO" id="GO:0140096">
    <property type="term" value="F:catalytic activity, acting on a protein"/>
    <property type="evidence" value="ECO:0007669"/>
    <property type="project" value="UniProtKB-ARBA"/>
</dbReference>
<dbReference type="GO" id="GO:0004827">
    <property type="term" value="F:proline-tRNA ligase activity"/>
    <property type="evidence" value="ECO:0007669"/>
    <property type="project" value="UniProtKB-UniRule"/>
</dbReference>
<dbReference type="GO" id="GO:0016740">
    <property type="term" value="F:transferase activity"/>
    <property type="evidence" value="ECO:0007669"/>
    <property type="project" value="UniProtKB-ARBA"/>
</dbReference>
<dbReference type="GO" id="GO:0006433">
    <property type="term" value="P:prolyl-tRNA aminoacylation"/>
    <property type="evidence" value="ECO:0007669"/>
    <property type="project" value="UniProtKB-UniRule"/>
</dbReference>
<dbReference type="CDD" id="cd04334">
    <property type="entry name" value="ProRS-INS"/>
    <property type="match status" value="1"/>
</dbReference>
<dbReference type="CDD" id="cd00861">
    <property type="entry name" value="ProRS_anticodon_short"/>
    <property type="match status" value="1"/>
</dbReference>
<dbReference type="CDD" id="cd00779">
    <property type="entry name" value="ProRS_core_prok"/>
    <property type="match status" value="1"/>
</dbReference>
<dbReference type="FunFam" id="3.30.930.10:FF:000066">
    <property type="entry name" value="Proline--tRNA ligase"/>
    <property type="match status" value="1"/>
</dbReference>
<dbReference type="FunFam" id="3.40.50.800:FF:000011">
    <property type="entry name" value="Proline--tRNA ligase"/>
    <property type="match status" value="1"/>
</dbReference>
<dbReference type="Gene3D" id="3.40.50.800">
    <property type="entry name" value="Anticodon-binding domain"/>
    <property type="match status" value="1"/>
</dbReference>
<dbReference type="Gene3D" id="3.30.930.10">
    <property type="entry name" value="Bira Bifunctional Protein, Domain 2"/>
    <property type="match status" value="2"/>
</dbReference>
<dbReference type="Gene3D" id="3.90.960.10">
    <property type="entry name" value="YbaK/aminoacyl-tRNA synthetase-associated domain"/>
    <property type="match status" value="1"/>
</dbReference>
<dbReference type="HAMAP" id="MF_01569">
    <property type="entry name" value="Pro_tRNA_synth_type1"/>
    <property type="match status" value="1"/>
</dbReference>
<dbReference type="InterPro" id="IPR002314">
    <property type="entry name" value="aa-tRNA-synt_IIb"/>
</dbReference>
<dbReference type="InterPro" id="IPR006195">
    <property type="entry name" value="aa-tRNA-synth_II"/>
</dbReference>
<dbReference type="InterPro" id="IPR045864">
    <property type="entry name" value="aa-tRNA-synth_II/BPL/LPL"/>
</dbReference>
<dbReference type="InterPro" id="IPR004154">
    <property type="entry name" value="Anticodon-bd"/>
</dbReference>
<dbReference type="InterPro" id="IPR036621">
    <property type="entry name" value="Anticodon-bd_dom_sf"/>
</dbReference>
<dbReference type="InterPro" id="IPR002316">
    <property type="entry name" value="Pro-tRNA-ligase_IIa"/>
</dbReference>
<dbReference type="InterPro" id="IPR004500">
    <property type="entry name" value="Pro-tRNA-synth_IIa_bac-type"/>
</dbReference>
<dbReference type="InterPro" id="IPR023717">
    <property type="entry name" value="Pro-tRNA-Synthase_IIa_type1"/>
</dbReference>
<dbReference type="InterPro" id="IPR050062">
    <property type="entry name" value="Pro-tRNA_synthetase"/>
</dbReference>
<dbReference type="InterPro" id="IPR044140">
    <property type="entry name" value="ProRS_anticodon_short"/>
</dbReference>
<dbReference type="InterPro" id="IPR033730">
    <property type="entry name" value="ProRS_core_prok"/>
</dbReference>
<dbReference type="InterPro" id="IPR036754">
    <property type="entry name" value="YbaK/aa-tRNA-synt-asso_dom_sf"/>
</dbReference>
<dbReference type="InterPro" id="IPR007214">
    <property type="entry name" value="YbaK/aa-tRNA-synth-assoc-dom"/>
</dbReference>
<dbReference type="NCBIfam" id="NF006625">
    <property type="entry name" value="PRK09194.1"/>
    <property type="match status" value="1"/>
</dbReference>
<dbReference type="NCBIfam" id="TIGR00409">
    <property type="entry name" value="proS_fam_II"/>
    <property type="match status" value="1"/>
</dbReference>
<dbReference type="PANTHER" id="PTHR42753">
    <property type="entry name" value="MITOCHONDRIAL RIBOSOME PROTEIN L39/PROLYL-TRNA LIGASE FAMILY MEMBER"/>
    <property type="match status" value="1"/>
</dbReference>
<dbReference type="PANTHER" id="PTHR42753:SF2">
    <property type="entry name" value="PROLINE--TRNA LIGASE"/>
    <property type="match status" value="1"/>
</dbReference>
<dbReference type="Pfam" id="PF03129">
    <property type="entry name" value="HGTP_anticodon"/>
    <property type="match status" value="1"/>
</dbReference>
<dbReference type="Pfam" id="PF00587">
    <property type="entry name" value="tRNA-synt_2b"/>
    <property type="match status" value="1"/>
</dbReference>
<dbReference type="Pfam" id="PF04073">
    <property type="entry name" value="tRNA_edit"/>
    <property type="match status" value="1"/>
</dbReference>
<dbReference type="PIRSF" id="PIRSF001535">
    <property type="entry name" value="ProRS_1"/>
    <property type="match status" value="1"/>
</dbReference>
<dbReference type="PRINTS" id="PR01046">
    <property type="entry name" value="TRNASYNTHPRO"/>
</dbReference>
<dbReference type="SUPFAM" id="SSF52954">
    <property type="entry name" value="Class II aaRS ABD-related"/>
    <property type="match status" value="1"/>
</dbReference>
<dbReference type="SUPFAM" id="SSF55681">
    <property type="entry name" value="Class II aaRS and biotin synthetases"/>
    <property type="match status" value="1"/>
</dbReference>
<dbReference type="SUPFAM" id="SSF55826">
    <property type="entry name" value="YbaK/ProRS associated domain"/>
    <property type="match status" value="1"/>
</dbReference>
<dbReference type="PROSITE" id="PS50862">
    <property type="entry name" value="AA_TRNA_LIGASE_II"/>
    <property type="match status" value="1"/>
</dbReference>
<reference key="1">
    <citation type="submission" date="2009-01" db="EMBL/GenBank/DDBJ databases">
        <title>Complete sequence of chromosome of Caldicellulosiruptor becscii DSM 6725.</title>
        <authorList>
            <person name="Lucas S."/>
            <person name="Copeland A."/>
            <person name="Lapidus A."/>
            <person name="Glavina del Rio T."/>
            <person name="Tice H."/>
            <person name="Bruce D."/>
            <person name="Goodwin L."/>
            <person name="Pitluck S."/>
            <person name="Sims D."/>
            <person name="Meincke L."/>
            <person name="Brettin T."/>
            <person name="Detter J.C."/>
            <person name="Han C."/>
            <person name="Larimer F."/>
            <person name="Land M."/>
            <person name="Hauser L."/>
            <person name="Kyrpides N."/>
            <person name="Ovchinnikova G."/>
            <person name="Kataeva I."/>
            <person name="Adams M.W.W."/>
        </authorList>
    </citation>
    <scope>NUCLEOTIDE SEQUENCE [LARGE SCALE GENOMIC DNA]</scope>
    <source>
        <strain>ATCC BAA-1888 / DSM 6725 / KCTC 15123 / Z-1320</strain>
    </source>
</reference>
<accession>B9MPD7</accession>
<organism>
    <name type="scientific">Caldicellulosiruptor bescii (strain ATCC BAA-1888 / DSM 6725 / KCTC 15123 / Z-1320)</name>
    <name type="common">Anaerocellum thermophilum</name>
    <dbReference type="NCBI Taxonomy" id="521460"/>
    <lineage>
        <taxon>Bacteria</taxon>
        <taxon>Bacillati</taxon>
        <taxon>Bacillota</taxon>
        <taxon>Bacillota incertae sedis</taxon>
        <taxon>Caldicellulosiruptorales</taxon>
        <taxon>Caldicellulosiruptoraceae</taxon>
        <taxon>Caldicellulosiruptor</taxon>
    </lineage>
</organism>
<name>SYP_CALBD</name>
<comment type="function">
    <text evidence="1">Catalyzes the attachment of proline to tRNA(Pro) in a two-step reaction: proline is first activated by ATP to form Pro-AMP and then transferred to the acceptor end of tRNA(Pro). As ProRS can inadvertently accommodate and process non-cognate amino acids such as alanine and cysteine, to avoid such errors it has two additional distinct editing activities against alanine. One activity is designated as 'pretransfer' editing and involves the tRNA(Pro)-independent hydrolysis of activated Ala-AMP. The other activity is designated 'posttransfer' editing and involves deacylation of mischarged Ala-tRNA(Pro). The misacylated Cys-tRNA(Pro) is not edited by ProRS.</text>
</comment>
<comment type="catalytic activity">
    <reaction evidence="1">
        <text>tRNA(Pro) + L-proline + ATP = L-prolyl-tRNA(Pro) + AMP + diphosphate</text>
        <dbReference type="Rhea" id="RHEA:14305"/>
        <dbReference type="Rhea" id="RHEA-COMP:9700"/>
        <dbReference type="Rhea" id="RHEA-COMP:9702"/>
        <dbReference type="ChEBI" id="CHEBI:30616"/>
        <dbReference type="ChEBI" id="CHEBI:33019"/>
        <dbReference type="ChEBI" id="CHEBI:60039"/>
        <dbReference type="ChEBI" id="CHEBI:78442"/>
        <dbReference type="ChEBI" id="CHEBI:78532"/>
        <dbReference type="ChEBI" id="CHEBI:456215"/>
        <dbReference type="EC" id="6.1.1.15"/>
    </reaction>
</comment>
<comment type="subunit">
    <text evidence="1">Homodimer.</text>
</comment>
<comment type="subcellular location">
    <subcellularLocation>
        <location evidence="1">Cytoplasm</location>
    </subcellularLocation>
</comment>
<comment type="domain">
    <text evidence="1">Consists of three domains: the N-terminal catalytic domain, the editing domain and the C-terminal anticodon-binding domain.</text>
</comment>
<comment type="similarity">
    <text evidence="1">Belongs to the class-II aminoacyl-tRNA synthetase family. ProS type 1 subfamily.</text>
</comment>
<protein>
    <recommendedName>
        <fullName evidence="1">Proline--tRNA ligase</fullName>
        <ecNumber evidence="1">6.1.1.15</ecNumber>
    </recommendedName>
    <alternativeName>
        <fullName evidence="1">Prolyl-tRNA synthetase</fullName>
        <shortName evidence="1">ProRS</shortName>
    </alternativeName>
</protein>
<keyword id="KW-0030">Aminoacyl-tRNA synthetase</keyword>
<keyword id="KW-0067">ATP-binding</keyword>
<keyword id="KW-0963">Cytoplasm</keyword>
<keyword id="KW-0436">Ligase</keyword>
<keyword id="KW-0547">Nucleotide-binding</keyword>
<keyword id="KW-0648">Protein biosynthesis</keyword>